<comment type="similarity">
    <text evidence="1">Belongs to the bacterial ribosomal protein bL32 family.</text>
</comment>
<evidence type="ECO:0000255" key="1">
    <source>
        <dbReference type="HAMAP-Rule" id="MF_00340"/>
    </source>
</evidence>
<evidence type="ECO:0000256" key="2">
    <source>
        <dbReference type="SAM" id="MobiDB-lite"/>
    </source>
</evidence>
<evidence type="ECO:0000305" key="3"/>
<feature type="chain" id="PRO_1000059816" description="Large ribosomal subunit protein bL32">
    <location>
        <begin position="1"/>
        <end position="59"/>
    </location>
</feature>
<feature type="region of interest" description="Disordered" evidence="2">
    <location>
        <begin position="1"/>
        <end position="21"/>
    </location>
</feature>
<feature type="compositionally biased region" description="Basic residues" evidence="2">
    <location>
        <begin position="1"/>
        <end position="15"/>
    </location>
</feature>
<gene>
    <name evidence="1" type="primary">rpmF</name>
    <name type="ordered locus">Amet_2761</name>
</gene>
<name>RL32_ALKMQ</name>
<accession>A6TRU4</accession>
<sequence>MAVPKRKTSKSKRDMRRASNSKFVAPGYVKCPQCHETKLPHRVCPDCGHYNGKEVIAAE</sequence>
<proteinExistence type="inferred from homology"/>
<organism>
    <name type="scientific">Alkaliphilus metalliredigens (strain QYMF)</name>
    <dbReference type="NCBI Taxonomy" id="293826"/>
    <lineage>
        <taxon>Bacteria</taxon>
        <taxon>Bacillati</taxon>
        <taxon>Bacillota</taxon>
        <taxon>Clostridia</taxon>
        <taxon>Peptostreptococcales</taxon>
        <taxon>Natronincolaceae</taxon>
        <taxon>Alkaliphilus</taxon>
    </lineage>
</organism>
<keyword id="KW-1185">Reference proteome</keyword>
<keyword id="KW-0687">Ribonucleoprotein</keyword>
<keyword id="KW-0689">Ribosomal protein</keyword>
<protein>
    <recommendedName>
        <fullName evidence="1">Large ribosomal subunit protein bL32</fullName>
    </recommendedName>
    <alternativeName>
        <fullName evidence="3">50S ribosomal protein L32</fullName>
    </alternativeName>
</protein>
<dbReference type="EMBL" id="CP000724">
    <property type="protein sequence ID" value="ABR48912.1"/>
    <property type="molecule type" value="Genomic_DNA"/>
</dbReference>
<dbReference type="RefSeq" id="WP_012063884.1">
    <property type="nucleotide sequence ID" value="NC_009633.1"/>
</dbReference>
<dbReference type="SMR" id="A6TRU4"/>
<dbReference type="STRING" id="293826.Amet_2761"/>
<dbReference type="KEGG" id="amt:Amet_2761"/>
<dbReference type="eggNOG" id="COG0333">
    <property type="taxonomic scope" value="Bacteria"/>
</dbReference>
<dbReference type="HOGENOM" id="CLU_129084_1_3_9"/>
<dbReference type="OrthoDB" id="9812874at2"/>
<dbReference type="Proteomes" id="UP000001572">
    <property type="component" value="Chromosome"/>
</dbReference>
<dbReference type="GO" id="GO:0015934">
    <property type="term" value="C:large ribosomal subunit"/>
    <property type="evidence" value="ECO:0007669"/>
    <property type="project" value="InterPro"/>
</dbReference>
<dbReference type="GO" id="GO:0003735">
    <property type="term" value="F:structural constituent of ribosome"/>
    <property type="evidence" value="ECO:0007669"/>
    <property type="project" value="InterPro"/>
</dbReference>
<dbReference type="GO" id="GO:0006412">
    <property type="term" value="P:translation"/>
    <property type="evidence" value="ECO:0007669"/>
    <property type="project" value="UniProtKB-UniRule"/>
</dbReference>
<dbReference type="Gene3D" id="1.20.5.640">
    <property type="entry name" value="Single helix bin"/>
    <property type="match status" value="1"/>
</dbReference>
<dbReference type="HAMAP" id="MF_00340">
    <property type="entry name" value="Ribosomal_bL32"/>
    <property type="match status" value="1"/>
</dbReference>
<dbReference type="InterPro" id="IPR002677">
    <property type="entry name" value="Ribosomal_bL32"/>
</dbReference>
<dbReference type="InterPro" id="IPR044957">
    <property type="entry name" value="Ribosomal_bL32_bact"/>
</dbReference>
<dbReference type="InterPro" id="IPR011332">
    <property type="entry name" value="Ribosomal_zn-bd"/>
</dbReference>
<dbReference type="NCBIfam" id="TIGR01031">
    <property type="entry name" value="rpmF_bact"/>
    <property type="match status" value="1"/>
</dbReference>
<dbReference type="PANTHER" id="PTHR35534">
    <property type="entry name" value="50S RIBOSOMAL PROTEIN L32"/>
    <property type="match status" value="1"/>
</dbReference>
<dbReference type="PANTHER" id="PTHR35534:SF1">
    <property type="entry name" value="LARGE RIBOSOMAL SUBUNIT PROTEIN BL32"/>
    <property type="match status" value="1"/>
</dbReference>
<dbReference type="Pfam" id="PF01783">
    <property type="entry name" value="Ribosomal_L32p"/>
    <property type="match status" value="1"/>
</dbReference>
<dbReference type="SUPFAM" id="SSF57829">
    <property type="entry name" value="Zn-binding ribosomal proteins"/>
    <property type="match status" value="1"/>
</dbReference>
<reference key="1">
    <citation type="journal article" date="2016" name="Genome Announc.">
        <title>Complete genome sequence of Alkaliphilus metalliredigens strain QYMF, an alkaliphilic and metal-reducing bacterium isolated from borax-contaminated leachate ponds.</title>
        <authorList>
            <person name="Hwang C."/>
            <person name="Copeland A."/>
            <person name="Lucas S."/>
            <person name="Lapidus A."/>
            <person name="Barry K."/>
            <person name="Detter J.C."/>
            <person name="Glavina Del Rio T."/>
            <person name="Hammon N."/>
            <person name="Israni S."/>
            <person name="Dalin E."/>
            <person name="Tice H."/>
            <person name="Pitluck S."/>
            <person name="Chertkov O."/>
            <person name="Brettin T."/>
            <person name="Bruce D."/>
            <person name="Han C."/>
            <person name="Schmutz J."/>
            <person name="Larimer F."/>
            <person name="Land M.L."/>
            <person name="Hauser L."/>
            <person name="Kyrpides N."/>
            <person name="Mikhailova N."/>
            <person name="Ye Q."/>
            <person name="Zhou J."/>
            <person name="Richardson P."/>
            <person name="Fields M.W."/>
        </authorList>
    </citation>
    <scope>NUCLEOTIDE SEQUENCE [LARGE SCALE GENOMIC DNA]</scope>
    <source>
        <strain>QYMF</strain>
    </source>
</reference>